<feature type="initiator methionine" description="Removed" evidence="3 4">
    <location>
        <position position="1"/>
    </location>
</feature>
<feature type="chain" id="PRO_0000056898" description="Anthranilate synthase component 2">
    <location>
        <begin position="2"/>
        <end position="193"/>
    </location>
</feature>
<feature type="domain" description="Glutamine amidotransferase type-1" evidence="1">
    <location>
        <begin position="3"/>
        <end position="193"/>
    </location>
</feature>
<feature type="active site" description="Nucleophile; for GATase activity" evidence="2">
    <location>
        <position position="84"/>
    </location>
</feature>
<feature type="active site" description="For GATase activity" evidence="1">
    <location>
        <position position="170"/>
    </location>
</feature>
<feature type="active site" description="For GATase activity" evidence="1">
    <location>
        <position position="172"/>
    </location>
</feature>
<feature type="binding site" evidence="6">
    <location>
        <begin position="57"/>
        <end position="59"/>
    </location>
    <ligand>
        <name>L-glutamine</name>
        <dbReference type="ChEBI" id="CHEBI:58359"/>
    </ligand>
</feature>
<feature type="binding site" evidence="6">
    <location>
        <position position="88"/>
    </location>
    <ligand>
        <name>L-glutamine</name>
        <dbReference type="ChEBI" id="CHEBI:58359"/>
    </ligand>
</feature>
<feature type="binding site" evidence="6">
    <location>
        <begin position="134"/>
        <end position="135"/>
    </location>
    <ligand>
        <name>L-glutamine</name>
        <dbReference type="ChEBI" id="CHEBI:58359"/>
    </ligand>
</feature>
<feature type="sequence conflict" description="In Ref. 2; AA sequence." evidence="5" ref="2">
    <original>G</original>
    <variation>A</variation>
    <location>
        <position position="36"/>
    </location>
</feature>
<feature type="sequence conflict" description="In Ref. 2; AA sequence and 3; AA sequence." evidence="5" ref="2 3">
    <original>E</original>
    <variation>Q</variation>
    <location>
        <position position="38"/>
    </location>
</feature>
<feature type="sequence conflict" description="In Ref. 2; AA sequence." evidence="5" ref="2">
    <original>Q</original>
    <variation>E</variation>
    <location>
        <position position="45"/>
    </location>
</feature>
<feature type="sequence conflict" description="In Ref. 3; AA sequence." evidence="5" ref="3">
    <original>H</original>
    <variation>Q</variation>
    <location>
        <position position="46"/>
    </location>
</feature>
<feature type="sequence conflict" description="In Ref. 2; AA sequence." evidence="5" ref="2">
    <original>E</original>
    <variation>T</variation>
    <location>
        <position position="48"/>
    </location>
</feature>
<feature type="sequence conflict" description="In Ref. 3; AA sequence." evidence="5" ref="3">
    <original>TPS</original>
    <variation>ASV</variation>
    <location>
        <begin position="60"/>
        <end position="62"/>
    </location>
</feature>
<feature type="sequence conflict" description="In Ref. 2; AA sequence." evidence="5" ref="2">
    <original>Q</original>
    <variation>R</variation>
    <location>
        <position position="77"/>
    </location>
</feature>
<feature type="sequence conflict" description="In Ref. 2; AA sequence." evidence="5" ref="2">
    <original>S</original>
    <variation>F</variation>
    <location>
        <position position="150"/>
    </location>
</feature>
<feature type="strand" evidence="7">
    <location>
        <begin position="3"/>
        <end position="8"/>
    </location>
</feature>
<feature type="helix" evidence="7">
    <location>
        <begin position="14"/>
        <end position="23"/>
    </location>
</feature>
<feature type="strand" evidence="7">
    <location>
        <begin position="27"/>
        <end position="32"/>
    </location>
</feature>
<feature type="helix" evidence="7">
    <location>
        <begin position="37"/>
        <end position="46"/>
    </location>
</feature>
<feature type="strand" evidence="7">
    <location>
        <begin position="48"/>
        <end position="54"/>
    </location>
</feature>
<feature type="helix" evidence="7">
    <location>
        <begin position="61"/>
        <end position="63"/>
    </location>
</feature>
<feature type="helix" evidence="7">
    <location>
        <begin position="67"/>
        <end position="74"/>
    </location>
</feature>
<feature type="turn" evidence="8">
    <location>
        <begin position="75"/>
        <end position="77"/>
    </location>
</feature>
<feature type="strand" evidence="7">
    <location>
        <begin position="80"/>
        <end position="83"/>
    </location>
</feature>
<feature type="helix" evidence="7">
    <location>
        <begin position="85"/>
        <end position="93"/>
    </location>
</feature>
<feature type="strand" evidence="7">
    <location>
        <begin position="97"/>
        <end position="114"/>
    </location>
</feature>
<feature type="helix" evidence="7">
    <location>
        <begin position="118"/>
        <end position="120"/>
    </location>
</feature>
<feature type="strand" evidence="7">
    <location>
        <begin position="125"/>
        <end position="139"/>
    </location>
</feature>
<feature type="strand" evidence="7">
    <location>
        <begin position="144"/>
        <end position="150"/>
    </location>
</feature>
<feature type="strand" evidence="7">
    <location>
        <begin position="153"/>
        <end position="159"/>
    </location>
</feature>
<feature type="turn" evidence="7">
    <location>
        <begin position="160"/>
        <end position="163"/>
    </location>
</feature>
<feature type="strand" evidence="7">
    <location>
        <begin position="164"/>
        <end position="169"/>
    </location>
</feature>
<feature type="helix" evidence="7">
    <location>
        <begin position="179"/>
        <end position="191"/>
    </location>
</feature>
<reference key="1">
    <citation type="journal article" date="1980" name="J. Mol. Biol.">
        <title>Nucleotide sequences of the trpG regions of Escherichia coli, Shigella dysenteriae, Salmonella typhimurium and Serratia marcescens.</title>
        <authorList>
            <person name="Nichols B.P."/>
            <person name="Miozzari G.F."/>
            <person name="van Cleemput M."/>
            <person name="Bennett G.N."/>
            <person name="Yanofsky C."/>
        </authorList>
    </citation>
    <scope>NUCLEOTIDE SEQUENCE [GENOMIC DNA]</scope>
</reference>
<reference key="2">
    <citation type="journal article" date="1980" name="J. Biol. Chem.">
        <title>Primary structure of Serratia marcescens anthranilate synthase component II.</title>
        <authorList>
            <person name="Tso J.Y."/>
            <person name="Hermodson M.A."/>
            <person name="Zalkin H."/>
        </authorList>
    </citation>
    <scope>PROTEIN SEQUENCE OF 2-193</scope>
</reference>
<reference key="3">
    <citation type="journal article" date="1974" name="Biochemistry">
        <title>Separation of anthranilate synthetase components I and II of Escherichia coli, Salmonella typhimurium, and Serratia marcescens and determination of their amino-terminal sequences by automatic Edman degradation.</title>
        <authorList>
            <person name="Li S.-L."/>
            <person name="Hanlon J."/>
            <person name="Yanofsky C."/>
        </authorList>
    </citation>
    <scope>PROTEIN SEQUENCE OF 2-62</scope>
</reference>
<reference key="4">
    <citation type="journal article" date="2001" name="Proc. Natl. Acad. Sci. U.S.A.">
        <title>The structures of anthranilate synthase of Serratia marcescens crystallized in the presence of (i) its substrates, chorismate and glutamine, and a product, glutamate, and (ii) its end-product inhibitor, L-tryptophan.</title>
        <authorList>
            <person name="Spraggon G."/>
            <person name="Kim C."/>
            <person name="Nguyen-Huu X."/>
            <person name="Yee M.-C."/>
            <person name="Yanofsky C."/>
            <person name="Mills S.E."/>
        </authorList>
    </citation>
    <scope>X-RAY CRYSTALLOGRAPHY (1.95 ANGSTROMS) IN COMPLEX WITH GLUTAMATE</scope>
    <scope>FUNCTION</scope>
    <scope>ACTIVE SITE</scope>
    <scope>SUBUNIT</scope>
</reference>
<keyword id="KW-0002">3D-structure</keyword>
<keyword id="KW-0028">Amino-acid biosynthesis</keyword>
<keyword id="KW-0057">Aromatic amino acid biosynthesis</keyword>
<keyword id="KW-0903">Direct protein sequencing</keyword>
<keyword id="KW-0315">Glutamine amidotransferase</keyword>
<keyword id="KW-0456">Lyase</keyword>
<keyword id="KW-0822">Tryptophan biosynthesis</keyword>
<name>TRPG_SERMA</name>
<sequence length="193" mass="20868">MADILLLDNVDSFTYNLVDQLRASGHQVVIYRNQIGAEVIIERLQHMEQPVLMLSPGPGTPSEAGCMPELLQRLRGQLPIIGICLGHQAIVEAYGGQVGQAGEILHGKASAIAHDGEGMFAGMANPLPVARYHSLVGSNIPADLTVNARSGEMVMAVRDDRRRVCGFQFHPESILTTHGARLLEQTLAWALAK</sequence>
<protein>
    <recommendedName>
        <fullName>Anthranilate synthase component 2</fullName>
        <shortName>AS</shortName>
        <shortName>ASII</shortName>
        <ecNumber>4.1.3.27</ecNumber>
    </recommendedName>
    <alternativeName>
        <fullName>Anthranilate synthase, GATase component</fullName>
    </alternativeName>
    <alternativeName>
        <fullName>Anthranilate synthase, glutamine amidotransferase component</fullName>
    </alternativeName>
</protein>
<gene>
    <name type="primary">trpG</name>
</gene>
<dbReference type="EC" id="4.1.3.27"/>
<dbReference type="EMBL" id="AY027546">
    <property type="protein sequence ID" value="AAK37409.1"/>
    <property type="molecule type" value="Genomic_DNA"/>
</dbReference>
<dbReference type="PIR" id="D92860">
    <property type="entry name" value="NNSE2"/>
</dbReference>
<dbReference type="PDB" id="1I7Q">
    <property type="method" value="X-ray"/>
    <property type="resolution" value="1.95 A"/>
    <property type="chains" value="B/D=1-193"/>
</dbReference>
<dbReference type="PDB" id="1I7S">
    <property type="method" value="X-ray"/>
    <property type="resolution" value="2.40 A"/>
    <property type="chains" value="B/D=1-193"/>
</dbReference>
<dbReference type="PDBsum" id="1I7Q"/>
<dbReference type="PDBsum" id="1I7S"/>
<dbReference type="SMR" id="P00900"/>
<dbReference type="IntAct" id="P00900">
    <property type="interactions" value="1"/>
</dbReference>
<dbReference type="STRING" id="273526.SMDB11_1934"/>
<dbReference type="MEROPS" id="C26.960"/>
<dbReference type="UniPathway" id="UPA00035">
    <property type="reaction ID" value="UER00040"/>
</dbReference>
<dbReference type="EvolutionaryTrace" id="P00900"/>
<dbReference type="GO" id="GO:0005829">
    <property type="term" value="C:cytosol"/>
    <property type="evidence" value="ECO:0007669"/>
    <property type="project" value="TreeGrafter"/>
</dbReference>
<dbReference type="GO" id="GO:0004048">
    <property type="term" value="F:anthranilate phosphoribosyltransferase activity"/>
    <property type="evidence" value="ECO:0007669"/>
    <property type="project" value="TreeGrafter"/>
</dbReference>
<dbReference type="GO" id="GO:0004049">
    <property type="term" value="F:anthranilate synthase activity"/>
    <property type="evidence" value="ECO:0007669"/>
    <property type="project" value="UniProtKB-EC"/>
</dbReference>
<dbReference type="GO" id="GO:0000162">
    <property type="term" value="P:L-tryptophan biosynthetic process"/>
    <property type="evidence" value="ECO:0007669"/>
    <property type="project" value="UniProtKB-UniPathway"/>
</dbReference>
<dbReference type="GO" id="GO:0002047">
    <property type="term" value="P:phenazine biosynthetic process"/>
    <property type="evidence" value="ECO:0007669"/>
    <property type="project" value="TreeGrafter"/>
</dbReference>
<dbReference type="CDD" id="cd01743">
    <property type="entry name" value="GATase1_Anthranilate_Synthase"/>
    <property type="match status" value="1"/>
</dbReference>
<dbReference type="FunFam" id="3.40.50.880:FF:000003">
    <property type="entry name" value="Anthranilate synthase component II"/>
    <property type="match status" value="1"/>
</dbReference>
<dbReference type="Gene3D" id="3.40.50.880">
    <property type="match status" value="1"/>
</dbReference>
<dbReference type="InterPro" id="IPR050472">
    <property type="entry name" value="Anth_synth/Amidotransfase"/>
</dbReference>
<dbReference type="InterPro" id="IPR029062">
    <property type="entry name" value="Class_I_gatase-like"/>
</dbReference>
<dbReference type="InterPro" id="IPR017926">
    <property type="entry name" value="GATASE"/>
</dbReference>
<dbReference type="InterPro" id="IPR006221">
    <property type="entry name" value="TrpG/PapA_dom"/>
</dbReference>
<dbReference type="NCBIfam" id="TIGR00566">
    <property type="entry name" value="trpG_papA"/>
    <property type="match status" value="1"/>
</dbReference>
<dbReference type="PANTHER" id="PTHR43418:SF2">
    <property type="entry name" value="BIFUNCTIONAL PROTEIN TRPGD"/>
    <property type="match status" value="1"/>
</dbReference>
<dbReference type="PANTHER" id="PTHR43418">
    <property type="entry name" value="MULTIFUNCTIONAL TRYPTOPHAN BIOSYNTHESIS PROTEIN-RELATED"/>
    <property type="match status" value="1"/>
</dbReference>
<dbReference type="Pfam" id="PF00117">
    <property type="entry name" value="GATase"/>
    <property type="match status" value="1"/>
</dbReference>
<dbReference type="PRINTS" id="PR00097">
    <property type="entry name" value="ANTSNTHASEII"/>
</dbReference>
<dbReference type="PRINTS" id="PR00099">
    <property type="entry name" value="CPSGATASE"/>
</dbReference>
<dbReference type="PRINTS" id="PR00096">
    <property type="entry name" value="GATASE"/>
</dbReference>
<dbReference type="SUPFAM" id="SSF52317">
    <property type="entry name" value="Class I glutamine amidotransferase-like"/>
    <property type="match status" value="1"/>
</dbReference>
<dbReference type="PROSITE" id="PS51273">
    <property type="entry name" value="GATASE_TYPE_1"/>
    <property type="match status" value="1"/>
</dbReference>
<evidence type="ECO:0000255" key="1">
    <source>
        <dbReference type="PROSITE-ProRule" id="PRU00605"/>
    </source>
</evidence>
<evidence type="ECO:0000269" key="2">
    <source>
    </source>
</evidence>
<evidence type="ECO:0000269" key="3">
    <source>
    </source>
</evidence>
<evidence type="ECO:0000269" key="4">
    <source>
    </source>
</evidence>
<evidence type="ECO:0000305" key="5"/>
<evidence type="ECO:0000305" key="6">
    <source>
    </source>
</evidence>
<evidence type="ECO:0007829" key="7">
    <source>
        <dbReference type="PDB" id="1I7Q"/>
    </source>
</evidence>
<evidence type="ECO:0007829" key="8">
    <source>
        <dbReference type="PDB" id="1I7S"/>
    </source>
</evidence>
<comment type="function">
    <text evidence="6">Part of a heterotetrameric complex that catalyzes the two-step biosynthesis of anthranilate, an intermediate in the biosynthesis of L-tryptophan. In the first step, the glutamine-binding beta subunit (TrpG) of anthranilate synthase (AS) provides the glutamine amidotransferase activity which generates ammonia as a substrate that, along with chorismate, is used in the second step, catalyzed by the large alpha subunit of AS (TrpE) to produce anthranilate. In the absence of TrpG, TrpE can synthesize anthranilate directly from chorismate and high concentrations of ammonia (Probable).</text>
</comment>
<comment type="catalytic activity">
    <reaction>
        <text>chorismate + L-glutamine = anthranilate + pyruvate + L-glutamate + H(+)</text>
        <dbReference type="Rhea" id="RHEA:21732"/>
        <dbReference type="ChEBI" id="CHEBI:15361"/>
        <dbReference type="ChEBI" id="CHEBI:15378"/>
        <dbReference type="ChEBI" id="CHEBI:16567"/>
        <dbReference type="ChEBI" id="CHEBI:29748"/>
        <dbReference type="ChEBI" id="CHEBI:29985"/>
        <dbReference type="ChEBI" id="CHEBI:58359"/>
        <dbReference type="EC" id="4.1.3.27"/>
    </reaction>
</comment>
<comment type="pathway">
    <text>Amino-acid biosynthesis; L-tryptophan biosynthesis; L-tryptophan from chorismate: step 1/5.</text>
</comment>
<comment type="subunit">
    <text evidence="2">Heterotetramer consisting of two non-identical subunits: a beta subunit (TrpG) and a large alpha subunit (TrpE).</text>
</comment>
<comment type="interaction">
    <interactant intactId="EBI-1031352">
        <id>P00900</id>
    </interactant>
    <interactant intactId="EBI-1031345">
        <id>P00897</id>
        <label>trpE</label>
    </interactant>
    <organismsDiffer>false</organismsDiffer>
    <experiments>2</experiments>
</comment>
<proteinExistence type="evidence at protein level"/>
<organism>
    <name type="scientific">Serratia marcescens</name>
    <dbReference type="NCBI Taxonomy" id="615"/>
    <lineage>
        <taxon>Bacteria</taxon>
        <taxon>Pseudomonadati</taxon>
        <taxon>Pseudomonadota</taxon>
        <taxon>Gammaproteobacteria</taxon>
        <taxon>Enterobacterales</taxon>
        <taxon>Yersiniaceae</taxon>
        <taxon>Serratia</taxon>
    </lineage>
</organism>
<accession>P00900</accession>